<reference key="1">
    <citation type="journal article" date="2009" name="J. Bacteriol.">
        <title>Complete genome sequence of Haemophilus parasuis SH0165.</title>
        <authorList>
            <person name="Yue M."/>
            <person name="Yang F."/>
            <person name="Yang J."/>
            <person name="Bei W."/>
            <person name="Cai X."/>
            <person name="Chen L."/>
            <person name="Dong J."/>
            <person name="Zhou R."/>
            <person name="Jin M."/>
            <person name="Jin Q."/>
            <person name="Chen H."/>
        </authorList>
    </citation>
    <scope>NUCLEOTIDE SEQUENCE [LARGE SCALE GENOMIC DNA]</scope>
    <source>
        <strain>SH0165</strain>
    </source>
</reference>
<name>MTNN_GLAP5</name>
<protein>
    <recommendedName>
        <fullName evidence="1">5'-methylthioadenosine/S-adenosylhomocysteine nucleosidase</fullName>
        <shortName evidence="1">MTA/SAH nucleosidase</shortName>
        <shortName evidence="1">MTAN</shortName>
        <ecNumber evidence="1">3.2.2.9</ecNumber>
    </recommendedName>
    <alternativeName>
        <fullName evidence="1">5'-deoxyadenosine nucleosidase</fullName>
        <shortName evidence="1">DOA nucleosidase</shortName>
        <shortName evidence="1">dAdo nucleosidase</shortName>
    </alternativeName>
    <alternativeName>
        <fullName evidence="1">5'-methylthioadenosine nucleosidase</fullName>
        <shortName evidence="1">MTA nucleosidase</shortName>
    </alternativeName>
    <alternativeName>
        <fullName evidence="1">S-adenosylhomocysteine nucleosidase</fullName>
        <shortName evidence="1">AdoHcy nucleosidase</shortName>
        <shortName evidence="1">SAH nucleosidase</shortName>
        <shortName evidence="1">SRH nucleosidase</shortName>
    </alternativeName>
</protein>
<accession>B8F704</accession>
<feature type="chain" id="PRO_1000187426" description="5'-methylthioadenosine/S-adenosylhomocysteine nucleosidase">
    <location>
        <begin position="1"/>
        <end position="230"/>
    </location>
</feature>
<feature type="active site" description="Proton acceptor" evidence="1">
    <location>
        <position position="12"/>
    </location>
</feature>
<feature type="active site" description="Proton donor" evidence="1">
    <location>
        <position position="197"/>
    </location>
</feature>
<feature type="binding site" evidence="1">
    <location>
        <position position="78"/>
    </location>
    <ligand>
        <name>substrate</name>
    </ligand>
</feature>
<feature type="binding site" evidence="1">
    <location>
        <position position="152"/>
    </location>
    <ligand>
        <name>substrate</name>
    </ligand>
</feature>
<feature type="binding site" evidence="1">
    <location>
        <begin position="173"/>
        <end position="174"/>
    </location>
    <ligand>
        <name>substrate</name>
    </ligand>
</feature>
<proteinExistence type="inferred from homology"/>
<sequence length="230" mass="24411">MKIGIIGAMAQEVEILLGYMAEPKLTEIAGCKIYEGKINNTDIALLQSGIGKTAAAMGTALLLQLTKPEMVINTGSAGGLDANLNVGDIVISTEVRHHDIDVTAFGYEKGQLPANPAAFMANEQLAQIAIKETEKAGFNAVSGLICSGDLFVNGNDMIARIRNDFPSVKAVEMEAASIAQVCHAFQVPFVVVRAISDVADKESHLSFDEFLPLAAEKSSEIVLAMLNNFA</sequence>
<gene>
    <name evidence="1" type="primary">mtnN</name>
    <name type="ordered locus">HAPS_1552</name>
</gene>
<comment type="function">
    <text evidence="1">Catalyzes the irreversible cleavage of the glycosidic bond in both 5'-methylthioadenosine (MTA) and S-adenosylhomocysteine (SAH/AdoHcy) to adenine and the corresponding thioribose, 5'-methylthioribose and S-ribosylhomocysteine, respectively. Also cleaves 5'-deoxyadenosine, a toxic by-product of radical S-adenosylmethionine (SAM) enzymes, into 5-deoxyribose and adenine.</text>
</comment>
<comment type="catalytic activity">
    <reaction evidence="1">
        <text>S-adenosyl-L-homocysteine + H2O = S-(5-deoxy-D-ribos-5-yl)-L-homocysteine + adenine</text>
        <dbReference type="Rhea" id="RHEA:17805"/>
        <dbReference type="ChEBI" id="CHEBI:15377"/>
        <dbReference type="ChEBI" id="CHEBI:16708"/>
        <dbReference type="ChEBI" id="CHEBI:57856"/>
        <dbReference type="ChEBI" id="CHEBI:58195"/>
        <dbReference type="EC" id="3.2.2.9"/>
    </reaction>
</comment>
<comment type="catalytic activity">
    <reaction evidence="1">
        <text>S-methyl-5'-thioadenosine + H2O = 5-(methylsulfanyl)-D-ribose + adenine</text>
        <dbReference type="Rhea" id="RHEA:13617"/>
        <dbReference type="ChEBI" id="CHEBI:15377"/>
        <dbReference type="ChEBI" id="CHEBI:16708"/>
        <dbReference type="ChEBI" id="CHEBI:17509"/>
        <dbReference type="ChEBI" id="CHEBI:78440"/>
        <dbReference type="EC" id="3.2.2.9"/>
    </reaction>
</comment>
<comment type="catalytic activity">
    <reaction evidence="1">
        <text>5'-deoxyadenosine + H2O = 5-deoxy-D-ribose + adenine</text>
        <dbReference type="Rhea" id="RHEA:29859"/>
        <dbReference type="ChEBI" id="CHEBI:15377"/>
        <dbReference type="ChEBI" id="CHEBI:16708"/>
        <dbReference type="ChEBI" id="CHEBI:17319"/>
        <dbReference type="ChEBI" id="CHEBI:149540"/>
        <dbReference type="EC" id="3.2.2.9"/>
    </reaction>
    <physiologicalReaction direction="left-to-right" evidence="1">
        <dbReference type="Rhea" id="RHEA:29860"/>
    </physiologicalReaction>
</comment>
<comment type="pathway">
    <text evidence="1">Amino-acid biosynthesis; L-methionine biosynthesis via salvage pathway; S-methyl-5-thio-alpha-D-ribose 1-phosphate from S-methyl-5'-thioadenosine (hydrolase route): step 1/2.</text>
</comment>
<comment type="similarity">
    <text evidence="1">Belongs to the PNP/UDP phosphorylase family. MtnN subfamily.</text>
</comment>
<evidence type="ECO:0000255" key="1">
    <source>
        <dbReference type="HAMAP-Rule" id="MF_01684"/>
    </source>
</evidence>
<dbReference type="EC" id="3.2.2.9" evidence="1"/>
<dbReference type="EMBL" id="CP001321">
    <property type="protein sequence ID" value="ACL33106.1"/>
    <property type="molecule type" value="Genomic_DNA"/>
</dbReference>
<dbReference type="RefSeq" id="WP_010786393.1">
    <property type="nucleotide sequence ID" value="NC_011852.1"/>
</dbReference>
<dbReference type="SMR" id="B8F704"/>
<dbReference type="STRING" id="557723.HAPS_1552"/>
<dbReference type="KEGG" id="hap:HAPS_1552"/>
<dbReference type="PATRIC" id="fig|557723.8.peg.1524"/>
<dbReference type="HOGENOM" id="CLU_031248_2_2_6"/>
<dbReference type="UniPathway" id="UPA00904">
    <property type="reaction ID" value="UER00871"/>
</dbReference>
<dbReference type="Proteomes" id="UP000006743">
    <property type="component" value="Chromosome"/>
</dbReference>
<dbReference type="GO" id="GO:0005829">
    <property type="term" value="C:cytosol"/>
    <property type="evidence" value="ECO:0007669"/>
    <property type="project" value="TreeGrafter"/>
</dbReference>
<dbReference type="GO" id="GO:0008782">
    <property type="term" value="F:adenosylhomocysteine nucleosidase activity"/>
    <property type="evidence" value="ECO:0007669"/>
    <property type="project" value="UniProtKB-UniRule"/>
</dbReference>
<dbReference type="GO" id="GO:0008930">
    <property type="term" value="F:methylthioadenosine nucleosidase activity"/>
    <property type="evidence" value="ECO:0007669"/>
    <property type="project" value="UniProtKB-UniRule"/>
</dbReference>
<dbReference type="GO" id="GO:0019509">
    <property type="term" value="P:L-methionine salvage from methylthioadenosine"/>
    <property type="evidence" value="ECO:0007669"/>
    <property type="project" value="UniProtKB-UniRule"/>
</dbReference>
<dbReference type="GO" id="GO:0019284">
    <property type="term" value="P:L-methionine salvage from S-adenosylmethionine"/>
    <property type="evidence" value="ECO:0007669"/>
    <property type="project" value="TreeGrafter"/>
</dbReference>
<dbReference type="GO" id="GO:0009164">
    <property type="term" value="P:nucleoside catabolic process"/>
    <property type="evidence" value="ECO:0007669"/>
    <property type="project" value="InterPro"/>
</dbReference>
<dbReference type="CDD" id="cd09008">
    <property type="entry name" value="MTAN"/>
    <property type="match status" value="1"/>
</dbReference>
<dbReference type="FunFam" id="3.40.50.1580:FF:000001">
    <property type="entry name" value="MTA/SAH nucleosidase family protein"/>
    <property type="match status" value="1"/>
</dbReference>
<dbReference type="Gene3D" id="3.40.50.1580">
    <property type="entry name" value="Nucleoside phosphorylase domain"/>
    <property type="match status" value="1"/>
</dbReference>
<dbReference type="HAMAP" id="MF_01684">
    <property type="entry name" value="Salvage_MtnN"/>
    <property type="match status" value="1"/>
</dbReference>
<dbReference type="InterPro" id="IPR010049">
    <property type="entry name" value="MTA_SAH_Nsdase"/>
</dbReference>
<dbReference type="InterPro" id="IPR000845">
    <property type="entry name" value="Nucleoside_phosphorylase_d"/>
</dbReference>
<dbReference type="InterPro" id="IPR035994">
    <property type="entry name" value="Nucleoside_phosphorylase_sf"/>
</dbReference>
<dbReference type="NCBIfam" id="TIGR01704">
    <property type="entry name" value="MTA_SAH-Nsdase"/>
    <property type="match status" value="1"/>
</dbReference>
<dbReference type="NCBIfam" id="NF004079">
    <property type="entry name" value="PRK05584.1"/>
    <property type="match status" value="1"/>
</dbReference>
<dbReference type="PANTHER" id="PTHR46832">
    <property type="entry name" value="5'-METHYLTHIOADENOSINE/S-ADENOSYLHOMOCYSTEINE NUCLEOSIDASE"/>
    <property type="match status" value="1"/>
</dbReference>
<dbReference type="PANTHER" id="PTHR46832:SF1">
    <property type="entry name" value="5'-METHYLTHIOADENOSINE_S-ADENOSYLHOMOCYSTEINE NUCLEOSIDASE"/>
    <property type="match status" value="1"/>
</dbReference>
<dbReference type="Pfam" id="PF01048">
    <property type="entry name" value="PNP_UDP_1"/>
    <property type="match status" value="1"/>
</dbReference>
<dbReference type="SUPFAM" id="SSF53167">
    <property type="entry name" value="Purine and uridine phosphorylases"/>
    <property type="match status" value="1"/>
</dbReference>
<organism>
    <name type="scientific">Glaesserella parasuis serovar 5 (strain SH0165)</name>
    <name type="common">Haemophilus parasuis</name>
    <dbReference type="NCBI Taxonomy" id="557723"/>
    <lineage>
        <taxon>Bacteria</taxon>
        <taxon>Pseudomonadati</taxon>
        <taxon>Pseudomonadota</taxon>
        <taxon>Gammaproteobacteria</taxon>
        <taxon>Pasteurellales</taxon>
        <taxon>Pasteurellaceae</taxon>
        <taxon>Glaesserella</taxon>
    </lineage>
</organism>
<keyword id="KW-0028">Amino-acid biosynthesis</keyword>
<keyword id="KW-0378">Hydrolase</keyword>
<keyword id="KW-0486">Methionine biosynthesis</keyword>
<keyword id="KW-1185">Reference proteome</keyword>